<evidence type="ECO:0000255" key="1">
    <source>
        <dbReference type="HAMAP-Rule" id="MF_01227"/>
    </source>
</evidence>
<proteinExistence type="inferred from homology"/>
<feature type="chain" id="PRO_1000139394" description="CTP synthase">
    <location>
        <begin position="1"/>
        <end position="542"/>
    </location>
</feature>
<feature type="domain" description="Glutamine amidotransferase type-1" evidence="1">
    <location>
        <begin position="291"/>
        <end position="541"/>
    </location>
</feature>
<feature type="region of interest" description="Amidoligase domain" evidence="1">
    <location>
        <begin position="1"/>
        <end position="265"/>
    </location>
</feature>
<feature type="active site" description="Nucleophile; for glutamine hydrolysis" evidence="1">
    <location>
        <position position="380"/>
    </location>
</feature>
<feature type="active site" evidence="1">
    <location>
        <position position="514"/>
    </location>
</feature>
<feature type="active site" evidence="1">
    <location>
        <position position="516"/>
    </location>
</feature>
<feature type="binding site" evidence="1">
    <location>
        <position position="13"/>
    </location>
    <ligand>
        <name>CTP</name>
        <dbReference type="ChEBI" id="CHEBI:37563"/>
        <note>allosteric inhibitor</note>
    </ligand>
</feature>
<feature type="binding site" evidence="1">
    <location>
        <position position="13"/>
    </location>
    <ligand>
        <name>UTP</name>
        <dbReference type="ChEBI" id="CHEBI:46398"/>
    </ligand>
</feature>
<feature type="binding site" evidence="1">
    <location>
        <begin position="14"/>
        <end position="19"/>
    </location>
    <ligand>
        <name>ATP</name>
        <dbReference type="ChEBI" id="CHEBI:30616"/>
    </ligand>
</feature>
<feature type="binding site" evidence="1">
    <location>
        <position position="54"/>
    </location>
    <ligand>
        <name>L-glutamine</name>
        <dbReference type="ChEBI" id="CHEBI:58359"/>
    </ligand>
</feature>
<feature type="binding site" evidence="1">
    <location>
        <position position="71"/>
    </location>
    <ligand>
        <name>ATP</name>
        <dbReference type="ChEBI" id="CHEBI:30616"/>
    </ligand>
</feature>
<feature type="binding site" evidence="1">
    <location>
        <position position="71"/>
    </location>
    <ligand>
        <name>Mg(2+)</name>
        <dbReference type="ChEBI" id="CHEBI:18420"/>
    </ligand>
</feature>
<feature type="binding site" evidence="1">
    <location>
        <position position="139"/>
    </location>
    <ligand>
        <name>Mg(2+)</name>
        <dbReference type="ChEBI" id="CHEBI:18420"/>
    </ligand>
</feature>
<feature type="binding site" evidence="1">
    <location>
        <begin position="146"/>
        <end position="148"/>
    </location>
    <ligand>
        <name>CTP</name>
        <dbReference type="ChEBI" id="CHEBI:37563"/>
        <note>allosteric inhibitor</note>
    </ligand>
</feature>
<feature type="binding site" evidence="1">
    <location>
        <begin position="186"/>
        <end position="191"/>
    </location>
    <ligand>
        <name>CTP</name>
        <dbReference type="ChEBI" id="CHEBI:37563"/>
        <note>allosteric inhibitor</note>
    </ligand>
</feature>
<feature type="binding site" evidence="1">
    <location>
        <begin position="186"/>
        <end position="191"/>
    </location>
    <ligand>
        <name>UTP</name>
        <dbReference type="ChEBI" id="CHEBI:46398"/>
    </ligand>
</feature>
<feature type="binding site" evidence="1">
    <location>
        <position position="222"/>
    </location>
    <ligand>
        <name>CTP</name>
        <dbReference type="ChEBI" id="CHEBI:37563"/>
        <note>allosteric inhibitor</note>
    </ligand>
</feature>
<feature type="binding site" evidence="1">
    <location>
        <position position="222"/>
    </location>
    <ligand>
        <name>UTP</name>
        <dbReference type="ChEBI" id="CHEBI:46398"/>
    </ligand>
</feature>
<feature type="binding site" evidence="1">
    <location>
        <position position="353"/>
    </location>
    <ligand>
        <name>L-glutamine</name>
        <dbReference type="ChEBI" id="CHEBI:58359"/>
    </ligand>
</feature>
<feature type="binding site" evidence="1">
    <location>
        <begin position="381"/>
        <end position="384"/>
    </location>
    <ligand>
        <name>L-glutamine</name>
        <dbReference type="ChEBI" id="CHEBI:58359"/>
    </ligand>
</feature>
<feature type="binding site" evidence="1">
    <location>
        <position position="404"/>
    </location>
    <ligand>
        <name>L-glutamine</name>
        <dbReference type="ChEBI" id="CHEBI:58359"/>
    </ligand>
</feature>
<feature type="binding site" evidence="1">
    <location>
        <position position="469"/>
    </location>
    <ligand>
        <name>L-glutamine</name>
        <dbReference type="ChEBI" id="CHEBI:58359"/>
    </ligand>
</feature>
<organism>
    <name type="scientific">Brucella ovis (strain ATCC 25840 / 63/290 / NCTC 10512)</name>
    <dbReference type="NCBI Taxonomy" id="444178"/>
    <lineage>
        <taxon>Bacteria</taxon>
        <taxon>Pseudomonadati</taxon>
        <taxon>Pseudomonadota</taxon>
        <taxon>Alphaproteobacteria</taxon>
        <taxon>Hyphomicrobiales</taxon>
        <taxon>Brucellaceae</taxon>
        <taxon>Brucella/Ochrobactrum group</taxon>
        <taxon>Brucella</taxon>
    </lineage>
</organism>
<sequence length="542" mass="60077">MARYVFITGGVVSSLGKGIAAAALAALLQARGYRVRIRKLDPYLNVDPGTMSPYQHGEVFVTDDGAETDLDLGHYERFTGRPANQQDNITTGRIYRNIIEKERRGDYLGATVQVIPHVTDEIKNFVLEGNEDYDFVLCEIGGTVGDIEAMPFLEAIRQLGNELPRGTAVYIHLTLMPYIPAAGELKTKPTQHSVKELRSIGIAPDILLVRADREIPESERRKLSLFCNVRESAVIQALDVATIYDVPIAYHKEGLDSEVLSAFGIDPAPKPRMDRWEEVSHRLHNPEGEVTIAVVGKYTGLKDAYKSLIEALHHGGLANKVKVNLDWIEAEVFESEDPAPYLEKVHGILVPGGFGERGAEGKILAAKFARERKVPYFGICFGMQMACIEAARNLVGIEDASSSEFGPTREPVVGLMTEWLKGNMLEKRAAAGDLGGTMRLGAYEAVLKPDSKIAQIYGSTDIHERHRHRYEVNIDYKDRLEAAGLNFAGMSPDGVLPETVEYADHPWFIGVQYHPELKSRPFEPHPLFASFIEAAIEQSRLV</sequence>
<accession>A5VQQ9</accession>
<protein>
    <recommendedName>
        <fullName evidence="1">CTP synthase</fullName>
        <ecNumber evidence="1">6.3.4.2</ecNumber>
    </recommendedName>
    <alternativeName>
        <fullName evidence="1">Cytidine 5'-triphosphate synthase</fullName>
    </alternativeName>
    <alternativeName>
        <fullName evidence="1">Cytidine triphosphate synthetase</fullName>
        <shortName evidence="1">CTP synthetase</shortName>
        <shortName evidence="1">CTPS</shortName>
    </alternativeName>
    <alternativeName>
        <fullName evidence="1">UTP--ammonia ligase</fullName>
    </alternativeName>
</protein>
<reference key="1">
    <citation type="journal article" date="2009" name="PLoS ONE">
        <title>Genome degradation in Brucella ovis corresponds with narrowing of its host range and tissue tropism.</title>
        <authorList>
            <person name="Tsolis R.M."/>
            <person name="Seshadri R."/>
            <person name="Santos R.L."/>
            <person name="Sangari F.J."/>
            <person name="Lobo J.M."/>
            <person name="de Jong M.F."/>
            <person name="Ren Q."/>
            <person name="Myers G."/>
            <person name="Brinkac L.M."/>
            <person name="Nelson W.C."/>
            <person name="Deboy R.T."/>
            <person name="Angiuoli S."/>
            <person name="Khouri H."/>
            <person name="Dimitrov G."/>
            <person name="Robinson J.R."/>
            <person name="Mulligan S."/>
            <person name="Walker R.L."/>
            <person name="Elzer P.E."/>
            <person name="Hassan K.A."/>
            <person name="Paulsen I.T."/>
        </authorList>
    </citation>
    <scope>NUCLEOTIDE SEQUENCE [LARGE SCALE GENOMIC DNA]</scope>
    <source>
        <strain>ATCC 25840 / 63/290 / NCTC 10512</strain>
    </source>
</reference>
<dbReference type="EC" id="6.3.4.2" evidence="1"/>
<dbReference type="EMBL" id="CP000708">
    <property type="protein sequence ID" value="ABQ60096.1"/>
    <property type="molecule type" value="Genomic_DNA"/>
</dbReference>
<dbReference type="RefSeq" id="WP_004685676.1">
    <property type="nucleotide sequence ID" value="NC_009505.1"/>
</dbReference>
<dbReference type="SMR" id="A5VQQ9"/>
<dbReference type="KEGG" id="bov:BOV_1094"/>
<dbReference type="HOGENOM" id="CLU_011675_5_0_5"/>
<dbReference type="PhylomeDB" id="A5VQQ9"/>
<dbReference type="UniPathway" id="UPA00159">
    <property type="reaction ID" value="UER00277"/>
</dbReference>
<dbReference type="Proteomes" id="UP000006383">
    <property type="component" value="Chromosome I"/>
</dbReference>
<dbReference type="GO" id="GO:0005829">
    <property type="term" value="C:cytosol"/>
    <property type="evidence" value="ECO:0007669"/>
    <property type="project" value="TreeGrafter"/>
</dbReference>
<dbReference type="GO" id="GO:0005524">
    <property type="term" value="F:ATP binding"/>
    <property type="evidence" value="ECO:0007669"/>
    <property type="project" value="UniProtKB-KW"/>
</dbReference>
<dbReference type="GO" id="GO:0003883">
    <property type="term" value="F:CTP synthase activity"/>
    <property type="evidence" value="ECO:0007669"/>
    <property type="project" value="UniProtKB-UniRule"/>
</dbReference>
<dbReference type="GO" id="GO:0004359">
    <property type="term" value="F:glutaminase activity"/>
    <property type="evidence" value="ECO:0007669"/>
    <property type="project" value="RHEA"/>
</dbReference>
<dbReference type="GO" id="GO:0042802">
    <property type="term" value="F:identical protein binding"/>
    <property type="evidence" value="ECO:0007669"/>
    <property type="project" value="TreeGrafter"/>
</dbReference>
<dbReference type="GO" id="GO:0046872">
    <property type="term" value="F:metal ion binding"/>
    <property type="evidence" value="ECO:0007669"/>
    <property type="project" value="UniProtKB-KW"/>
</dbReference>
<dbReference type="GO" id="GO:0044210">
    <property type="term" value="P:'de novo' CTP biosynthetic process"/>
    <property type="evidence" value="ECO:0007669"/>
    <property type="project" value="UniProtKB-UniRule"/>
</dbReference>
<dbReference type="GO" id="GO:0019856">
    <property type="term" value="P:pyrimidine nucleobase biosynthetic process"/>
    <property type="evidence" value="ECO:0007669"/>
    <property type="project" value="TreeGrafter"/>
</dbReference>
<dbReference type="CDD" id="cd03113">
    <property type="entry name" value="CTPS_N"/>
    <property type="match status" value="1"/>
</dbReference>
<dbReference type="CDD" id="cd01746">
    <property type="entry name" value="GATase1_CTP_Synthase"/>
    <property type="match status" value="1"/>
</dbReference>
<dbReference type="FunFam" id="3.40.50.300:FF:000009">
    <property type="entry name" value="CTP synthase"/>
    <property type="match status" value="1"/>
</dbReference>
<dbReference type="FunFam" id="3.40.50.880:FF:000002">
    <property type="entry name" value="CTP synthase"/>
    <property type="match status" value="1"/>
</dbReference>
<dbReference type="Gene3D" id="3.40.50.880">
    <property type="match status" value="1"/>
</dbReference>
<dbReference type="Gene3D" id="3.40.50.300">
    <property type="entry name" value="P-loop containing nucleotide triphosphate hydrolases"/>
    <property type="match status" value="1"/>
</dbReference>
<dbReference type="HAMAP" id="MF_01227">
    <property type="entry name" value="PyrG"/>
    <property type="match status" value="1"/>
</dbReference>
<dbReference type="InterPro" id="IPR029062">
    <property type="entry name" value="Class_I_gatase-like"/>
</dbReference>
<dbReference type="InterPro" id="IPR004468">
    <property type="entry name" value="CTP_synthase"/>
</dbReference>
<dbReference type="InterPro" id="IPR017456">
    <property type="entry name" value="CTP_synthase_N"/>
</dbReference>
<dbReference type="InterPro" id="IPR017926">
    <property type="entry name" value="GATASE"/>
</dbReference>
<dbReference type="InterPro" id="IPR033828">
    <property type="entry name" value="GATase1_CTP_Synthase"/>
</dbReference>
<dbReference type="InterPro" id="IPR027417">
    <property type="entry name" value="P-loop_NTPase"/>
</dbReference>
<dbReference type="NCBIfam" id="NF003792">
    <property type="entry name" value="PRK05380.1"/>
    <property type="match status" value="1"/>
</dbReference>
<dbReference type="NCBIfam" id="TIGR00337">
    <property type="entry name" value="PyrG"/>
    <property type="match status" value="1"/>
</dbReference>
<dbReference type="PANTHER" id="PTHR11550">
    <property type="entry name" value="CTP SYNTHASE"/>
    <property type="match status" value="1"/>
</dbReference>
<dbReference type="PANTHER" id="PTHR11550:SF0">
    <property type="entry name" value="CTP SYNTHASE-RELATED"/>
    <property type="match status" value="1"/>
</dbReference>
<dbReference type="Pfam" id="PF06418">
    <property type="entry name" value="CTP_synth_N"/>
    <property type="match status" value="1"/>
</dbReference>
<dbReference type="Pfam" id="PF00117">
    <property type="entry name" value="GATase"/>
    <property type="match status" value="1"/>
</dbReference>
<dbReference type="SUPFAM" id="SSF52317">
    <property type="entry name" value="Class I glutamine amidotransferase-like"/>
    <property type="match status" value="1"/>
</dbReference>
<dbReference type="SUPFAM" id="SSF52540">
    <property type="entry name" value="P-loop containing nucleoside triphosphate hydrolases"/>
    <property type="match status" value="1"/>
</dbReference>
<dbReference type="PROSITE" id="PS51273">
    <property type="entry name" value="GATASE_TYPE_1"/>
    <property type="match status" value="1"/>
</dbReference>
<comment type="function">
    <text evidence="1">Catalyzes the ATP-dependent amination of UTP to CTP with either L-glutamine or ammonia as the source of nitrogen. Regulates intracellular CTP levels through interactions with the four ribonucleotide triphosphates.</text>
</comment>
<comment type="catalytic activity">
    <reaction evidence="1">
        <text>UTP + L-glutamine + ATP + H2O = CTP + L-glutamate + ADP + phosphate + 2 H(+)</text>
        <dbReference type="Rhea" id="RHEA:26426"/>
        <dbReference type="ChEBI" id="CHEBI:15377"/>
        <dbReference type="ChEBI" id="CHEBI:15378"/>
        <dbReference type="ChEBI" id="CHEBI:29985"/>
        <dbReference type="ChEBI" id="CHEBI:30616"/>
        <dbReference type="ChEBI" id="CHEBI:37563"/>
        <dbReference type="ChEBI" id="CHEBI:43474"/>
        <dbReference type="ChEBI" id="CHEBI:46398"/>
        <dbReference type="ChEBI" id="CHEBI:58359"/>
        <dbReference type="ChEBI" id="CHEBI:456216"/>
        <dbReference type="EC" id="6.3.4.2"/>
    </reaction>
</comment>
<comment type="catalytic activity">
    <reaction evidence="1">
        <text>L-glutamine + H2O = L-glutamate + NH4(+)</text>
        <dbReference type="Rhea" id="RHEA:15889"/>
        <dbReference type="ChEBI" id="CHEBI:15377"/>
        <dbReference type="ChEBI" id="CHEBI:28938"/>
        <dbReference type="ChEBI" id="CHEBI:29985"/>
        <dbReference type="ChEBI" id="CHEBI:58359"/>
    </reaction>
</comment>
<comment type="catalytic activity">
    <reaction evidence="1">
        <text>UTP + NH4(+) + ATP = CTP + ADP + phosphate + 2 H(+)</text>
        <dbReference type="Rhea" id="RHEA:16597"/>
        <dbReference type="ChEBI" id="CHEBI:15378"/>
        <dbReference type="ChEBI" id="CHEBI:28938"/>
        <dbReference type="ChEBI" id="CHEBI:30616"/>
        <dbReference type="ChEBI" id="CHEBI:37563"/>
        <dbReference type="ChEBI" id="CHEBI:43474"/>
        <dbReference type="ChEBI" id="CHEBI:46398"/>
        <dbReference type="ChEBI" id="CHEBI:456216"/>
    </reaction>
</comment>
<comment type="activity regulation">
    <text evidence="1">Allosterically activated by GTP, when glutamine is the substrate; GTP has no effect on the reaction when ammonia is the substrate. The allosteric effector GTP functions by stabilizing the protein conformation that binds the tetrahedral intermediate(s) formed during glutamine hydrolysis. Inhibited by the product CTP, via allosteric rather than competitive inhibition.</text>
</comment>
<comment type="pathway">
    <text evidence="1">Pyrimidine metabolism; CTP biosynthesis via de novo pathway; CTP from UDP: step 2/2.</text>
</comment>
<comment type="subunit">
    <text evidence="1">Homotetramer.</text>
</comment>
<comment type="miscellaneous">
    <text evidence="1">CTPSs have evolved a hybrid strategy for distinguishing between UTP and CTP. The overlapping regions of the product feedback inhibitory and substrate sites recognize a common feature in both compounds, the triphosphate moiety. To differentiate isosteric substrate and product pyrimidine rings, an additional pocket far from the expected kinase/ligase catalytic site, specifically recognizes the cytosine and ribose portions of the product inhibitor.</text>
</comment>
<comment type="similarity">
    <text evidence="1">Belongs to the CTP synthase family.</text>
</comment>
<keyword id="KW-0067">ATP-binding</keyword>
<keyword id="KW-0315">Glutamine amidotransferase</keyword>
<keyword id="KW-0436">Ligase</keyword>
<keyword id="KW-0460">Magnesium</keyword>
<keyword id="KW-0479">Metal-binding</keyword>
<keyword id="KW-0547">Nucleotide-binding</keyword>
<keyword id="KW-0665">Pyrimidine biosynthesis</keyword>
<gene>
    <name evidence="1" type="primary">pyrG</name>
    <name type="ordered locus">BOV_1094</name>
</gene>
<name>PYRG_BRUO2</name>